<dbReference type="EMBL" id="CP000826">
    <property type="protein sequence ID" value="ABV43730.1"/>
    <property type="molecule type" value="Genomic_DNA"/>
</dbReference>
<dbReference type="SMR" id="A8GKU0"/>
<dbReference type="STRING" id="399741.Spro_4637"/>
<dbReference type="KEGG" id="spe:Spro_4637"/>
<dbReference type="eggNOG" id="COG2909">
    <property type="taxonomic scope" value="Bacteria"/>
</dbReference>
<dbReference type="HOGENOM" id="CLU_006325_3_0_6"/>
<dbReference type="OrthoDB" id="1123107at2"/>
<dbReference type="GO" id="GO:0005524">
    <property type="term" value="F:ATP binding"/>
    <property type="evidence" value="ECO:0007669"/>
    <property type="project" value="UniProtKB-UniRule"/>
</dbReference>
<dbReference type="GO" id="GO:0003677">
    <property type="term" value="F:DNA binding"/>
    <property type="evidence" value="ECO:0007669"/>
    <property type="project" value="UniProtKB-KW"/>
</dbReference>
<dbReference type="GO" id="GO:0003700">
    <property type="term" value="F:DNA-binding transcription factor activity"/>
    <property type="evidence" value="ECO:0007669"/>
    <property type="project" value="UniProtKB-UniRule"/>
</dbReference>
<dbReference type="GO" id="GO:0045913">
    <property type="term" value="P:positive regulation of carbohydrate metabolic process"/>
    <property type="evidence" value="ECO:0007669"/>
    <property type="project" value="UniProtKB-UniRule"/>
</dbReference>
<dbReference type="GO" id="GO:0045893">
    <property type="term" value="P:positive regulation of DNA-templated transcription"/>
    <property type="evidence" value="ECO:0007669"/>
    <property type="project" value="UniProtKB-UniRule"/>
</dbReference>
<dbReference type="CDD" id="cd06170">
    <property type="entry name" value="LuxR_C_like"/>
    <property type="match status" value="1"/>
</dbReference>
<dbReference type="FunFam" id="1.10.10.10:FF:000115">
    <property type="entry name" value="HTH-type transcriptional regulator MalT"/>
    <property type="match status" value="1"/>
</dbReference>
<dbReference type="Gene3D" id="1.25.40.10">
    <property type="entry name" value="Tetratricopeptide repeat domain"/>
    <property type="match status" value="1"/>
</dbReference>
<dbReference type="Gene3D" id="1.10.10.10">
    <property type="entry name" value="Winged helix-like DNA-binding domain superfamily/Winged helix DNA-binding domain"/>
    <property type="match status" value="1"/>
</dbReference>
<dbReference type="HAMAP" id="MF_01247">
    <property type="entry name" value="HTH_type_MalT"/>
    <property type="match status" value="1"/>
</dbReference>
<dbReference type="InterPro" id="IPR027417">
    <property type="entry name" value="P-loop_NTPase"/>
</dbReference>
<dbReference type="InterPro" id="IPR016032">
    <property type="entry name" value="Sig_transdc_resp-reg_C-effctor"/>
</dbReference>
<dbReference type="InterPro" id="IPR011990">
    <property type="entry name" value="TPR-like_helical_dom_sf"/>
</dbReference>
<dbReference type="InterPro" id="IPR041617">
    <property type="entry name" value="TPR_MalT"/>
</dbReference>
<dbReference type="InterPro" id="IPR023768">
    <property type="entry name" value="Tscrpt_reg_HTH_MalT"/>
</dbReference>
<dbReference type="InterPro" id="IPR000792">
    <property type="entry name" value="Tscrpt_reg_LuxR_C"/>
</dbReference>
<dbReference type="InterPro" id="IPR036388">
    <property type="entry name" value="WH-like_DNA-bd_sf"/>
</dbReference>
<dbReference type="NCBIfam" id="NF003420">
    <property type="entry name" value="PRK04841.1"/>
    <property type="match status" value="1"/>
</dbReference>
<dbReference type="PANTHER" id="PTHR44688">
    <property type="entry name" value="DNA-BINDING TRANSCRIPTIONAL ACTIVATOR DEVR_DOSR"/>
    <property type="match status" value="1"/>
</dbReference>
<dbReference type="PANTHER" id="PTHR44688:SF16">
    <property type="entry name" value="DNA-BINDING TRANSCRIPTIONAL ACTIVATOR DEVR_DOSR"/>
    <property type="match status" value="1"/>
</dbReference>
<dbReference type="Pfam" id="PF00196">
    <property type="entry name" value="GerE"/>
    <property type="match status" value="1"/>
</dbReference>
<dbReference type="Pfam" id="PF17874">
    <property type="entry name" value="TPR_MalT"/>
    <property type="match status" value="1"/>
</dbReference>
<dbReference type="PRINTS" id="PR00038">
    <property type="entry name" value="HTHLUXR"/>
</dbReference>
<dbReference type="SMART" id="SM00421">
    <property type="entry name" value="HTH_LUXR"/>
    <property type="match status" value="1"/>
</dbReference>
<dbReference type="SUPFAM" id="SSF46894">
    <property type="entry name" value="C-terminal effector domain of the bipartite response regulators"/>
    <property type="match status" value="1"/>
</dbReference>
<dbReference type="SUPFAM" id="SSF52540">
    <property type="entry name" value="P-loop containing nucleoside triphosphate hydrolases"/>
    <property type="match status" value="1"/>
</dbReference>
<dbReference type="SUPFAM" id="SSF48452">
    <property type="entry name" value="TPR-like"/>
    <property type="match status" value="1"/>
</dbReference>
<dbReference type="PROSITE" id="PS00622">
    <property type="entry name" value="HTH_LUXR_1"/>
    <property type="match status" value="1"/>
</dbReference>
<dbReference type="PROSITE" id="PS50043">
    <property type="entry name" value="HTH_LUXR_2"/>
    <property type="match status" value="1"/>
</dbReference>
<proteinExistence type="inferred from homology"/>
<feature type="chain" id="PRO_1000085778" description="HTH-type transcriptional regulator MalT">
    <location>
        <begin position="1"/>
        <end position="904"/>
    </location>
</feature>
<feature type="domain" description="HTH luxR-type" evidence="1">
    <location>
        <begin position="832"/>
        <end position="897"/>
    </location>
</feature>
<feature type="DNA-binding region" description="H-T-H motif" evidence="1">
    <location>
        <begin position="856"/>
        <end position="875"/>
    </location>
</feature>
<feature type="binding site" evidence="1">
    <location>
        <begin position="39"/>
        <end position="46"/>
    </location>
    <ligand>
        <name>ATP</name>
        <dbReference type="ChEBI" id="CHEBI:30616"/>
    </ligand>
</feature>
<reference key="1">
    <citation type="submission" date="2007-09" db="EMBL/GenBank/DDBJ databases">
        <title>Complete sequence of chromosome of Serratia proteamaculans 568.</title>
        <authorList>
            <consortium name="US DOE Joint Genome Institute"/>
            <person name="Copeland A."/>
            <person name="Lucas S."/>
            <person name="Lapidus A."/>
            <person name="Barry K."/>
            <person name="Glavina del Rio T."/>
            <person name="Dalin E."/>
            <person name="Tice H."/>
            <person name="Pitluck S."/>
            <person name="Chain P."/>
            <person name="Malfatti S."/>
            <person name="Shin M."/>
            <person name="Vergez L."/>
            <person name="Schmutz J."/>
            <person name="Larimer F."/>
            <person name="Land M."/>
            <person name="Hauser L."/>
            <person name="Kyrpides N."/>
            <person name="Kim E."/>
            <person name="Taghavi S."/>
            <person name="Newman L."/>
            <person name="Vangronsveld J."/>
            <person name="van der Lelie D."/>
            <person name="Richardson P."/>
        </authorList>
    </citation>
    <scope>NUCLEOTIDE SEQUENCE [LARGE SCALE GENOMIC DNA]</scope>
    <source>
        <strain>568</strain>
    </source>
</reference>
<keyword id="KW-0010">Activator</keyword>
<keyword id="KW-0067">ATP-binding</keyword>
<keyword id="KW-0119">Carbohydrate metabolism</keyword>
<keyword id="KW-0238">DNA-binding</keyword>
<keyword id="KW-0547">Nucleotide-binding</keyword>
<keyword id="KW-0804">Transcription</keyword>
<keyword id="KW-0805">Transcription regulation</keyword>
<comment type="function">
    <text evidence="1">Positively regulates the transcription of the maltose regulon whose gene products are responsible for uptake and catabolism of malto-oligosaccharides. Specifically binds to the promoter region of its target genes, recognizing a short DNA motif called the MalT box.</text>
</comment>
<comment type="activity regulation">
    <text evidence="1">Activated by ATP and maltotriose, which are both required for DNA binding.</text>
</comment>
<comment type="subunit">
    <text evidence="1">Monomer in solution. Oligomerizes to an active state in the presence of the positive effectors ATP and maltotriose.</text>
</comment>
<comment type="similarity">
    <text evidence="1">Belongs to the MalT family.</text>
</comment>
<accession>A8GKU0</accession>
<protein>
    <recommendedName>
        <fullName evidence="1">HTH-type transcriptional regulator MalT</fullName>
    </recommendedName>
    <alternativeName>
        <fullName evidence="1">ATP-dependent transcriptional activator MalT</fullName>
    </alternativeName>
</protein>
<name>MALT_SERP5</name>
<gene>
    <name evidence="1" type="primary">malT</name>
    <name type="ordered locus">Spro_4637</name>
</gene>
<sequence length="904" mass="103392">MLIPSKLSRPVRLQNTVIRDRLLAKLASTANYRLTLVNCPAGYGKTTLVAQWAAGKSDLGWYSLDESDNQPERFASYLIAALQLASGGHCVKSEALSQKHQYASLSALFAQLFIELSDWHQPLYLVIDDYHLITNDVIHEAMRFFLRHQPENLTLILLSRTLPPLGIANLRVRDQLLEMGTQQLAFTHQEAKQFFDCRLVSPMESQDSSRLCDEVEGWATALQLIALSARQSNSSAQQSAKRLAGLNASHLSDYLVDEVLDHVDAEARAFLLRCSVLRSMNDALIVRLTGEDNGQQRLEELERQGLFIHRMDDSGEWFCFHPLFATFLRQRCQWELALELPGLHRAAAEGWLALGYPAEAIHHALAASDVSMLRDILLQHAWSLFHHSELALLEECLNALPYERLIQNPKLALLQAWLAQSQHRYSEVNTLLERAEQAMRDQKIEVDRTLEAEFDALRAQVAINAGKPEEAERLATEALKFLPLSSYYSRIVATSVTGEVHHCKGELARALPMMQQTEQMARRHQAYHYALWALLQQSEILIAQGFLQAAFETQDKAFELVREQHLEQLPMHEFLLRIRSQILWSWSRLDEAEDAAREGLKILANYQPQQQLQCIAMLAKCSLARGDLDNANAHMQRCEVLLHGTQYHRDWLTNADKPRVIHWQMTGDTTAAAQWLRQTEKPGMADNHFMQGQWRNIARVQIMLGQYEEAEVVLDELNENARRLRLVSDLNRNLLLSNQLYWQMERKSDAQKVLMEALSLASRTGFISHFVIEGEAMAQQLRQLIQLNTLPELENHRAQRILRDINQHHRHKFAHFDENFVDKLLTHPQVPELIRTSPLTQREWQVLGLIYSGYSNDQIAGELAVAATTIKTHIRNLYQKLGVAHRQEAVQQAQQLLKMMGYGA</sequence>
<evidence type="ECO:0000255" key="1">
    <source>
        <dbReference type="HAMAP-Rule" id="MF_01247"/>
    </source>
</evidence>
<organism>
    <name type="scientific">Serratia proteamaculans (strain 568)</name>
    <dbReference type="NCBI Taxonomy" id="399741"/>
    <lineage>
        <taxon>Bacteria</taxon>
        <taxon>Pseudomonadati</taxon>
        <taxon>Pseudomonadota</taxon>
        <taxon>Gammaproteobacteria</taxon>
        <taxon>Enterobacterales</taxon>
        <taxon>Yersiniaceae</taxon>
        <taxon>Serratia</taxon>
    </lineage>
</organism>